<keyword id="KW-0067">ATP-binding</keyword>
<keyword id="KW-0106">Calcium</keyword>
<keyword id="KW-0418">Kinase</keyword>
<keyword id="KW-0449">Lipoprotein</keyword>
<keyword id="KW-0472">Membrane</keyword>
<keyword id="KW-0479">Metal-binding</keyword>
<keyword id="KW-0519">Myristate</keyword>
<keyword id="KW-0547">Nucleotide-binding</keyword>
<keyword id="KW-0597">Phosphoprotein</keyword>
<keyword id="KW-1185">Reference proteome</keyword>
<keyword id="KW-0677">Repeat</keyword>
<keyword id="KW-0723">Serine/threonine-protein kinase</keyword>
<keyword id="KW-0808">Transferase</keyword>
<sequence>MGLCHGKPIEQQSKNLPISNEIEETPKNSSQKAKSSGFPFYSPSPLPSLFKTSPAVSSSSVSSTPLRIFKRPFPPPSPAKHIRALLARRHGSVKPNEASIPEGSECEVGLDKKFGFSKQFASHYEIDGEVGRGHFGYTCSAKGKKGSLKGQDVAVKVIPKSKMTTAIAIEDVRREVKILRALTGHKNLVQFYDAFEDDENVYIVMELCQGGELLDKILQRGGKYSEVDAKKVMIQILSVVAYCHLQGVVHRDLKPENFLFTTKDESSPLKAIDFGLSDYVRPDERLNDIVGSAYYVAPEVLHRTYGTEADMWSIGVIAYILLCGSRPFWARSESGIFRAVLKAEPNFEEAPWPSLSPDAVDFVKRLLNKDYRKRLTAAQALCHPWLVGSHELKIPSDMIIYKLVKVYIMSSSLRKSALAALAKTLTVPQLTYLQEQFNLLGPSKNGYISMQNYKTAILKSSTEATKDSRVLDFVHMISCLQYKKLDFEEFCASALSVYQLEAMETWEQHARRAYELYEKDGNRVIMIEELATELGLGPSVPVHVVLQDWIRHSDGKLSFLGFVRLLHGVSSRTLQKA</sequence>
<name>CAMK7_ARATH</name>
<dbReference type="EC" id="2.7.11.1"/>
<dbReference type="EMBL" id="AL390921">
    <property type="protein sequence ID" value="CAC00739.1"/>
    <property type="molecule type" value="Genomic_DNA"/>
</dbReference>
<dbReference type="EMBL" id="CP002686">
    <property type="protein sequence ID" value="AEE79562.1"/>
    <property type="molecule type" value="Genomic_DNA"/>
</dbReference>
<dbReference type="PIR" id="T51264">
    <property type="entry name" value="T51264"/>
</dbReference>
<dbReference type="RefSeq" id="NP_191235.1">
    <property type="nucleotide sequence ID" value="NM_115535.3"/>
</dbReference>
<dbReference type="SMR" id="Q9LET1"/>
<dbReference type="FunCoup" id="Q9LET1">
    <property type="interactions" value="1594"/>
</dbReference>
<dbReference type="STRING" id="3702.Q9LET1"/>
<dbReference type="iPTMnet" id="Q9LET1"/>
<dbReference type="PaxDb" id="3702-AT3G56760.1"/>
<dbReference type="ProteomicsDB" id="240318"/>
<dbReference type="EnsemblPlants" id="AT3G56760.1">
    <property type="protein sequence ID" value="AT3G56760.1"/>
    <property type="gene ID" value="AT3G56760"/>
</dbReference>
<dbReference type="GeneID" id="824843"/>
<dbReference type="Gramene" id="AT3G56760.1">
    <property type="protein sequence ID" value="AT3G56760.1"/>
    <property type="gene ID" value="AT3G56760"/>
</dbReference>
<dbReference type="KEGG" id="ath:AT3G56760"/>
<dbReference type="Araport" id="AT3G56760"/>
<dbReference type="TAIR" id="AT3G56760"/>
<dbReference type="eggNOG" id="KOG0032">
    <property type="taxonomic scope" value="Eukaryota"/>
</dbReference>
<dbReference type="HOGENOM" id="CLU_000288_37_2_1"/>
<dbReference type="InParanoid" id="Q9LET1"/>
<dbReference type="OMA" id="CHGKPSQ"/>
<dbReference type="PhylomeDB" id="Q9LET1"/>
<dbReference type="PRO" id="PR:Q9LET1"/>
<dbReference type="Proteomes" id="UP000006548">
    <property type="component" value="Chromosome 3"/>
</dbReference>
<dbReference type="ExpressionAtlas" id="Q9LET1">
    <property type="expression patterns" value="baseline and differential"/>
</dbReference>
<dbReference type="GO" id="GO:0016020">
    <property type="term" value="C:membrane"/>
    <property type="evidence" value="ECO:0007669"/>
    <property type="project" value="UniProtKB-SubCell"/>
</dbReference>
<dbReference type="GO" id="GO:0005524">
    <property type="term" value="F:ATP binding"/>
    <property type="evidence" value="ECO:0007669"/>
    <property type="project" value="UniProtKB-KW"/>
</dbReference>
<dbReference type="GO" id="GO:0046872">
    <property type="term" value="F:metal ion binding"/>
    <property type="evidence" value="ECO:0007669"/>
    <property type="project" value="UniProtKB-KW"/>
</dbReference>
<dbReference type="GO" id="GO:0106310">
    <property type="term" value="F:protein serine kinase activity"/>
    <property type="evidence" value="ECO:0007669"/>
    <property type="project" value="RHEA"/>
</dbReference>
<dbReference type="GO" id="GO:0004674">
    <property type="term" value="F:protein serine/threonine kinase activity"/>
    <property type="evidence" value="ECO:0007669"/>
    <property type="project" value="UniProtKB-KW"/>
</dbReference>
<dbReference type="CDD" id="cd05117">
    <property type="entry name" value="STKc_CAMK"/>
    <property type="match status" value="1"/>
</dbReference>
<dbReference type="FunFam" id="1.10.510.10:FF:001864">
    <property type="entry name" value="Calcium-dependent protein kinase SK5"/>
    <property type="match status" value="1"/>
</dbReference>
<dbReference type="FunFam" id="1.10.238.10:FF:000233">
    <property type="entry name" value="CDPK-related kinase 1"/>
    <property type="match status" value="1"/>
</dbReference>
<dbReference type="FunFam" id="3.30.200.20:FF:000101">
    <property type="entry name" value="CDPK-related kinase 1"/>
    <property type="match status" value="1"/>
</dbReference>
<dbReference type="FunFam" id="1.10.510.10:FF:001294">
    <property type="entry name" value="CDPK-related kinase 3"/>
    <property type="match status" value="1"/>
</dbReference>
<dbReference type="Gene3D" id="1.10.238.10">
    <property type="entry name" value="EF-hand"/>
    <property type="match status" value="1"/>
</dbReference>
<dbReference type="Gene3D" id="3.30.200.20">
    <property type="entry name" value="Phosphorylase Kinase, domain 1"/>
    <property type="match status" value="1"/>
</dbReference>
<dbReference type="Gene3D" id="1.10.510.10">
    <property type="entry name" value="Transferase(Phosphotransferase) domain 1"/>
    <property type="match status" value="1"/>
</dbReference>
<dbReference type="InterPro" id="IPR050205">
    <property type="entry name" value="CDPK_Ser/Thr_kinases"/>
</dbReference>
<dbReference type="InterPro" id="IPR011992">
    <property type="entry name" value="EF-hand-dom_pair"/>
</dbReference>
<dbReference type="InterPro" id="IPR011009">
    <property type="entry name" value="Kinase-like_dom_sf"/>
</dbReference>
<dbReference type="InterPro" id="IPR000719">
    <property type="entry name" value="Prot_kinase_dom"/>
</dbReference>
<dbReference type="InterPro" id="IPR017441">
    <property type="entry name" value="Protein_kinase_ATP_BS"/>
</dbReference>
<dbReference type="InterPro" id="IPR008271">
    <property type="entry name" value="Ser/Thr_kinase_AS"/>
</dbReference>
<dbReference type="PANTHER" id="PTHR24349">
    <property type="entry name" value="SERINE/THREONINE-PROTEIN KINASE"/>
    <property type="match status" value="1"/>
</dbReference>
<dbReference type="Pfam" id="PF00069">
    <property type="entry name" value="Pkinase"/>
    <property type="match status" value="1"/>
</dbReference>
<dbReference type="SMART" id="SM00220">
    <property type="entry name" value="S_TKc"/>
    <property type="match status" value="1"/>
</dbReference>
<dbReference type="SUPFAM" id="SSF47473">
    <property type="entry name" value="EF-hand"/>
    <property type="match status" value="1"/>
</dbReference>
<dbReference type="SUPFAM" id="SSF56112">
    <property type="entry name" value="Protein kinase-like (PK-like)"/>
    <property type="match status" value="1"/>
</dbReference>
<dbReference type="PROSITE" id="PS00107">
    <property type="entry name" value="PROTEIN_KINASE_ATP"/>
    <property type="match status" value="1"/>
</dbReference>
<dbReference type="PROSITE" id="PS50011">
    <property type="entry name" value="PROTEIN_KINASE_DOM"/>
    <property type="match status" value="1"/>
</dbReference>
<dbReference type="PROSITE" id="PS00108">
    <property type="entry name" value="PROTEIN_KINASE_ST"/>
    <property type="match status" value="1"/>
</dbReference>
<proteinExistence type="evidence at protein level"/>
<organism>
    <name type="scientific">Arabidopsis thaliana</name>
    <name type="common">Mouse-ear cress</name>
    <dbReference type="NCBI Taxonomy" id="3702"/>
    <lineage>
        <taxon>Eukaryota</taxon>
        <taxon>Viridiplantae</taxon>
        <taxon>Streptophyta</taxon>
        <taxon>Embryophyta</taxon>
        <taxon>Tracheophyta</taxon>
        <taxon>Spermatophyta</taxon>
        <taxon>Magnoliopsida</taxon>
        <taxon>eudicotyledons</taxon>
        <taxon>Gunneridae</taxon>
        <taxon>Pentapetalae</taxon>
        <taxon>rosids</taxon>
        <taxon>malvids</taxon>
        <taxon>Brassicales</taxon>
        <taxon>Brassicaceae</taxon>
        <taxon>Camelineae</taxon>
        <taxon>Arabidopsis</taxon>
    </lineage>
</organism>
<feature type="initiator methionine" description="Removed" evidence="3">
    <location>
        <position position="1"/>
    </location>
</feature>
<feature type="chain" id="PRO_0000420534" description="CDPK-related kinase 7">
    <location>
        <begin position="2"/>
        <end position="577"/>
    </location>
</feature>
<feature type="domain" description="Protein kinase" evidence="4">
    <location>
        <begin position="124"/>
        <end position="386"/>
    </location>
</feature>
<feature type="domain" description="EF-hand 1">
    <location>
        <begin position="428"/>
        <end position="464"/>
    </location>
</feature>
<feature type="domain" description="EF-hand 2">
    <location>
        <begin position="465"/>
        <end position="500"/>
    </location>
</feature>
<feature type="domain" description="EF-hand 3">
    <location>
        <begin position="501"/>
        <end position="540"/>
    </location>
</feature>
<feature type="domain" description="EF-hand 4">
    <location>
        <begin position="543"/>
        <end position="572"/>
    </location>
</feature>
<feature type="region of interest" description="Disordered" evidence="6">
    <location>
        <begin position="1"/>
        <end position="38"/>
    </location>
</feature>
<feature type="region of interest" description="Autoinhibitory domain" evidence="1">
    <location>
        <begin position="391"/>
        <end position="421"/>
    </location>
</feature>
<feature type="region of interest" description="Calmodulin binding (CaMBD)" evidence="1">
    <location>
        <begin position="410"/>
        <end position="430"/>
    </location>
</feature>
<feature type="active site" description="Proton acceptor" evidence="4 5">
    <location>
        <position position="252"/>
    </location>
</feature>
<feature type="binding site" evidence="4">
    <location>
        <begin position="130"/>
        <end position="138"/>
    </location>
    <ligand>
        <name>ATP</name>
        <dbReference type="ChEBI" id="CHEBI:30616"/>
    </ligand>
</feature>
<feature type="binding site" evidence="4">
    <location>
        <position position="156"/>
    </location>
    <ligand>
        <name>ATP</name>
        <dbReference type="ChEBI" id="CHEBI:30616"/>
    </ligand>
</feature>
<feature type="binding site" evidence="1">
    <location>
        <position position="443"/>
    </location>
    <ligand>
        <name>Ca(2+)</name>
        <dbReference type="ChEBI" id="CHEBI:29108"/>
        <label>1</label>
    </ligand>
</feature>
<feature type="binding site" evidence="1">
    <location>
        <position position="445"/>
    </location>
    <ligand>
        <name>Ca(2+)</name>
        <dbReference type="ChEBI" id="CHEBI:29108"/>
        <label>1</label>
    </ligand>
</feature>
<feature type="binding site" evidence="1">
    <location>
        <position position="447"/>
    </location>
    <ligand>
        <name>Ca(2+)</name>
        <dbReference type="ChEBI" id="CHEBI:29108"/>
        <label>1</label>
    </ligand>
</feature>
<feature type="binding site" evidence="1">
    <location>
        <position position="484"/>
    </location>
    <ligand>
        <name>Ca(2+)</name>
        <dbReference type="ChEBI" id="CHEBI:29108"/>
        <label>2</label>
    </ligand>
</feature>
<feature type="binding site" evidence="1">
    <location>
        <position position="489"/>
    </location>
    <ligand>
        <name>Ca(2+)</name>
        <dbReference type="ChEBI" id="CHEBI:29108"/>
        <label>2</label>
    </ligand>
</feature>
<feature type="binding site" evidence="1">
    <location>
        <position position="520"/>
    </location>
    <ligand>
        <name>Ca(2+)</name>
        <dbReference type="ChEBI" id="CHEBI:29108"/>
        <label>3</label>
    </ligand>
</feature>
<feature type="binding site" evidence="1">
    <location>
        <position position="522"/>
    </location>
    <ligand>
        <name>Ca(2+)</name>
        <dbReference type="ChEBI" id="CHEBI:29108"/>
        <label>3</label>
    </ligand>
</feature>
<feature type="binding site" evidence="1">
    <location>
        <position position="529"/>
    </location>
    <ligand>
        <name>Ca(2+)</name>
        <dbReference type="ChEBI" id="CHEBI:29108"/>
        <label>3</label>
    </ligand>
</feature>
<feature type="binding site" evidence="1">
    <location>
        <position position="554"/>
    </location>
    <ligand>
        <name>Ca(2+)</name>
        <dbReference type="ChEBI" id="CHEBI:29108"/>
        <label>4</label>
    </ligand>
</feature>
<feature type="binding site" evidence="1">
    <location>
        <position position="556"/>
    </location>
    <ligand>
        <name>Ca(2+)</name>
        <dbReference type="ChEBI" id="CHEBI:29108"/>
        <label>4</label>
    </ligand>
</feature>
<feature type="modified residue" description="Phosphoserine" evidence="2">
    <location>
        <position position="292"/>
    </location>
</feature>
<feature type="modified residue" description="Phosphoserine; by CPK1, CPK10 and CPK34" evidence="7">
    <location>
        <position position="334"/>
    </location>
</feature>
<feature type="modified residue" description="Phosphoserine" evidence="2">
    <location>
        <position position="558"/>
    </location>
</feature>
<feature type="lipid moiety-binding region" description="N-myristoyl glycine" evidence="1">
    <location>
        <position position="2"/>
    </location>
</feature>
<protein>
    <recommendedName>
        <fullName>CDPK-related kinase 7</fullName>
        <shortName>AtCRK7</shortName>
        <ecNumber>2.7.11.1</ecNumber>
    </recommendedName>
    <alternativeName>
        <fullName>Calcium/calmodulin-dependent protein kinase CRK7</fullName>
    </alternativeName>
</protein>
<evidence type="ECO:0000250" key="1"/>
<evidence type="ECO:0000250" key="2">
    <source>
        <dbReference type="UniProtKB" id="Q9FKW4"/>
    </source>
</evidence>
<evidence type="ECO:0000250" key="3">
    <source>
        <dbReference type="UniProtKB" id="Q9SG12"/>
    </source>
</evidence>
<evidence type="ECO:0000255" key="4">
    <source>
        <dbReference type="PROSITE-ProRule" id="PRU00159"/>
    </source>
</evidence>
<evidence type="ECO:0000255" key="5">
    <source>
        <dbReference type="PROSITE-ProRule" id="PRU10027"/>
    </source>
</evidence>
<evidence type="ECO:0000256" key="6">
    <source>
        <dbReference type="SAM" id="MobiDB-lite"/>
    </source>
</evidence>
<evidence type="ECO:0000269" key="7">
    <source>
    </source>
</evidence>
<comment type="function">
    <text evidence="1">May play a role in signal transduction pathways that involve calcium as a second messenger.</text>
</comment>
<comment type="catalytic activity">
    <reaction>
        <text>L-seryl-[protein] + ATP = O-phospho-L-seryl-[protein] + ADP + H(+)</text>
        <dbReference type="Rhea" id="RHEA:17989"/>
        <dbReference type="Rhea" id="RHEA-COMP:9863"/>
        <dbReference type="Rhea" id="RHEA-COMP:11604"/>
        <dbReference type="ChEBI" id="CHEBI:15378"/>
        <dbReference type="ChEBI" id="CHEBI:29999"/>
        <dbReference type="ChEBI" id="CHEBI:30616"/>
        <dbReference type="ChEBI" id="CHEBI:83421"/>
        <dbReference type="ChEBI" id="CHEBI:456216"/>
        <dbReference type="EC" id="2.7.11.1"/>
    </reaction>
</comment>
<comment type="catalytic activity">
    <reaction>
        <text>L-threonyl-[protein] + ATP = O-phospho-L-threonyl-[protein] + ADP + H(+)</text>
        <dbReference type="Rhea" id="RHEA:46608"/>
        <dbReference type="Rhea" id="RHEA-COMP:11060"/>
        <dbReference type="Rhea" id="RHEA-COMP:11605"/>
        <dbReference type="ChEBI" id="CHEBI:15378"/>
        <dbReference type="ChEBI" id="CHEBI:30013"/>
        <dbReference type="ChEBI" id="CHEBI:30616"/>
        <dbReference type="ChEBI" id="CHEBI:61977"/>
        <dbReference type="ChEBI" id="CHEBI:456216"/>
        <dbReference type="EC" id="2.7.11.1"/>
    </reaction>
</comment>
<comment type="activity regulation">
    <text evidence="1">Activated by calcium and calmodulin. Autophosphorylation may play an important role in the regulation of the kinase activity (By similarity).</text>
</comment>
<comment type="subunit">
    <text evidence="1">Binds calmodulin (CaM) in a calcium-dependent manner.</text>
</comment>
<comment type="subcellular location">
    <subcellularLocation>
        <location evidence="1">Membrane</location>
        <topology evidence="1">Lipid-anchor</topology>
        <orientation evidence="1">Cytoplasmic side</orientation>
    </subcellularLocation>
</comment>
<comment type="domain">
    <text evidence="1">There are 3 contiguous domains conserved in the CDPK subfamily: a kinase domain, an autoinhibitory (junction) domain and a calmodulin-like domain. The autoinhibitory domain (391-421) inactivates kinase activity under calcium-free conditions (By similarity).</text>
</comment>
<comment type="PTM">
    <text evidence="1">Autophosphorylated.</text>
</comment>
<comment type="similarity">
    <text evidence="4">Belongs to the protein kinase superfamily. Ser/Thr protein kinase family. CDPK subfamily.</text>
</comment>
<accession>Q9LET1</accession>
<reference key="1">
    <citation type="journal article" date="2000" name="Nature">
        <title>Sequence and analysis of chromosome 3 of the plant Arabidopsis thaliana.</title>
        <authorList>
            <person name="Salanoubat M."/>
            <person name="Lemcke K."/>
            <person name="Rieger M."/>
            <person name="Ansorge W."/>
            <person name="Unseld M."/>
            <person name="Fartmann B."/>
            <person name="Valle G."/>
            <person name="Bloecker H."/>
            <person name="Perez-Alonso M."/>
            <person name="Obermaier B."/>
            <person name="Delseny M."/>
            <person name="Boutry M."/>
            <person name="Grivell L.A."/>
            <person name="Mache R."/>
            <person name="Puigdomenech P."/>
            <person name="De Simone V."/>
            <person name="Choisne N."/>
            <person name="Artiguenave F."/>
            <person name="Robert C."/>
            <person name="Brottier P."/>
            <person name="Wincker P."/>
            <person name="Cattolico L."/>
            <person name="Weissenbach J."/>
            <person name="Saurin W."/>
            <person name="Quetier F."/>
            <person name="Schaefer M."/>
            <person name="Mueller-Auer S."/>
            <person name="Gabel C."/>
            <person name="Fuchs M."/>
            <person name="Benes V."/>
            <person name="Wurmbach E."/>
            <person name="Drzonek H."/>
            <person name="Erfle H."/>
            <person name="Jordan N."/>
            <person name="Bangert S."/>
            <person name="Wiedelmann R."/>
            <person name="Kranz H."/>
            <person name="Voss H."/>
            <person name="Holland R."/>
            <person name="Brandt P."/>
            <person name="Nyakatura G."/>
            <person name="Vezzi A."/>
            <person name="D'Angelo M."/>
            <person name="Pallavicini A."/>
            <person name="Toppo S."/>
            <person name="Simionati B."/>
            <person name="Conrad A."/>
            <person name="Hornischer K."/>
            <person name="Kauer G."/>
            <person name="Loehnert T.-H."/>
            <person name="Nordsiek G."/>
            <person name="Reichelt J."/>
            <person name="Scharfe M."/>
            <person name="Schoen O."/>
            <person name="Bargues M."/>
            <person name="Terol J."/>
            <person name="Climent J."/>
            <person name="Navarro P."/>
            <person name="Collado C."/>
            <person name="Perez-Perez A."/>
            <person name="Ottenwaelder B."/>
            <person name="Duchemin D."/>
            <person name="Cooke R."/>
            <person name="Laudie M."/>
            <person name="Berger-Llauro C."/>
            <person name="Purnelle B."/>
            <person name="Masuy D."/>
            <person name="de Haan M."/>
            <person name="Maarse A.C."/>
            <person name="Alcaraz J.-P."/>
            <person name="Cottet A."/>
            <person name="Casacuberta E."/>
            <person name="Monfort A."/>
            <person name="Argiriou A."/>
            <person name="Flores M."/>
            <person name="Liguori R."/>
            <person name="Vitale D."/>
            <person name="Mannhaupt G."/>
            <person name="Haase D."/>
            <person name="Schoof H."/>
            <person name="Rudd S."/>
            <person name="Zaccaria P."/>
            <person name="Mewes H.-W."/>
            <person name="Mayer K.F.X."/>
            <person name="Kaul S."/>
            <person name="Town C.D."/>
            <person name="Koo H.L."/>
            <person name="Tallon L.J."/>
            <person name="Jenkins J."/>
            <person name="Rooney T."/>
            <person name="Rizzo M."/>
            <person name="Walts A."/>
            <person name="Utterback T."/>
            <person name="Fujii C.Y."/>
            <person name="Shea T.P."/>
            <person name="Creasy T.H."/>
            <person name="Haas B."/>
            <person name="Maiti R."/>
            <person name="Wu D."/>
            <person name="Peterson J."/>
            <person name="Van Aken S."/>
            <person name="Pai G."/>
            <person name="Militscher J."/>
            <person name="Sellers P."/>
            <person name="Gill J.E."/>
            <person name="Feldblyum T.V."/>
            <person name="Preuss D."/>
            <person name="Lin X."/>
            <person name="Nierman W.C."/>
            <person name="Salzberg S.L."/>
            <person name="White O."/>
            <person name="Venter J.C."/>
            <person name="Fraser C.M."/>
            <person name="Kaneko T."/>
            <person name="Nakamura Y."/>
            <person name="Sato S."/>
            <person name="Kato T."/>
            <person name="Asamizu E."/>
            <person name="Sasamoto S."/>
            <person name="Kimura T."/>
            <person name="Idesawa K."/>
            <person name="Kawashima K."/>
            <person name="Kishida Y."/>
            <person name="Kiyokawa C."/>
            <person name="Kohara M."/>
            <person name="Matsumoto M."/>
            <person name="Matsuno A."/>
            <person name="Muraki A."/>
            <person name="Nakayama S."/>
            <person name="Nakazaki N."/>
            <person name="Shinpo S."/>
            <person name="Takeuchi C."/>
            <person name="Wada T."/>
            <person name="Watanabe A."/>
            <person name="Yamada M."/>
            <person name="Yasuda M."/>
            <person name="Tabata S."/>
        </authorList>
    </citation>
    <scope>NUCLEOTIDE SEQUENCE [LARGE SCALE GENOMIC DNA]</scope>
    <source>
        <strain>cv. Columbia</strain>
    </source>
</reference>
<reference key="2">
    <citation type="journal article" date="2017" name="Plant J.">
        <title>Araport11: a complete reannotation of the Arabidopsis thaliana reference genome.</title>
        <authorList>
            <person name="Cheng C.Y."/>
            <person name="Krishnakumar V."/>
            <person name="Chan A.P."/>
            <person name="Thibaud-Nissen F."/>
            <person name="Schobel S."/>
            <person name="Town C.D."/>
        </authorList>
    </citation>
    <scope>GENOME REANNOTATION</scope>
    <source>
        <strain>cv. Columbia</strain>
    </source>
</reference>
<reference key="3">
    <citation type="journal article" date="2003" name="Gravit. Space Biol. Bull.">
        <title>Calcium-regulated protein kinases of plants.</title>
        <authorList>
            <person name="Harmon A.C."/>
        </authorList>
    </citation>
    <scope>REVIEW</scope>
    <scope>GENE FAMILY</scope>
</reference>
<reference key="4">
    <citation type="journal article" date="2003" name="Plant Physiol.">
        <title>The Arabidopsis CDPK-SnRK superfamily of protein kinases.</title>
        <authorList>
            <person name="Hrabak E.M."/>
            <person name="Chan C.W.M."/>
            <person name="Gribskov M."/>
            <person name="Harper J.F."/>
            <person name="Choi J.H."/>
            <person name="Halford N."/>
            <person name="Kudla J."/>
            <person name="Luan S."/>
            <person name="Nimmo H.G."/>
            <person name="Sussman M.R."/>
            <person name="Thomas M."/>
            <person name="Walker-Simmons K."/>
            <person name="Zhu J.-K."/>
            <person name="Harmon A.C."/>
        </authorList>
    </citation>
    <scope>GENE FAMILY</scope>
    <scope>NOMENCLATURE</scope>
    <source>
        <strain>cv. Columbia</strain>
    </source>
</reference>
<reference key="5">
    <citation type="journal article" date="2005" name="Plant Sci.">
        <title>Biochemical and expression analysis of an Arabidopsis calcium-dependent protein kinase-related kinase.</title>
        <authorList>
            <person name="Du W."/>
            <person name="Wang Y."/>
            <person name="Liang S."/>
            <person name="Lu Y.-T."/>
        </authorList>
        <dbReference type="AGRICOLA" id="IND43694487"/>
    </citation>
    <scope>GENE FAMILY</scope>
    <source>
        <strain>cv. Columbia</strain>
    </source>
</reference>
<reference key="6">
    <citation type="journal article" date="2011" name="Front. Plant Sci.">
        <title>Calcium-dependent protein kinases from Arabidopsis show substrate specificity differences in an analysis of 103 substrates.</title>
        <authorList>
            <person name="Curran A."/>
            <person name="Chang I.-F."/>
            <person name="Chang C.-L."/>
            <person name="Garg S."/>
            <person name="Miguel R.M."/>
            <person name="Barron Y.D."/>
            <person name="Li Y."/>
            <person name="Romanowsky S."/>
            <person name="Cushman J.C."/>
            <person name="Gribskov M."/>
            <person name="Harmon A.C."/>
            <person name="Harper J.F."/>
        </authorList>
    </citation>
    <scope>PHOSPHORYLATION AT SER-334</scope>
</reference>
<gene>
    <name type="primary">CRK7</name>
    <name type="ordered locus">At3g56760</name>
    <name type="ORF">T8M16.90</name>
</gene>